<dbReference type="EMBL" id="AP006878">
    <property type="protein sequence ID" value="BAD84498.1"/>
    <property type="molecule type" value="Genomic_DNA"/>
</dbReference>
<dbReference type="RefSeq" id="WP_011249264.1">
    <property type="nucleotide sequence ID" value="NC_006624.1"/>
</dbReference>
<dbReference type="SMR" id="Q5JFZ3"/>
<dbReference type="FunCoup" id="Q5JFZ3">
    <property type="interactions" value="191"/>
</dbReference>
<dbReference type="IntAct" id="Q5JFZ3">
    <property type="interactions" value="1"/>
</dbReference>
<dbReference type="MINT" id="Q5JFZ3"/>
<dbReference type="STRING" id="69014.TK0309"/>
<dbReference type="EnsemblBacteria" id="BAD84498">
    <property type="protein sequence ID" value="BAD84498"/>
    <property type="gene ID" value="TK0309"/>
</dbReference>
<dbReference type="GeneID" id="78446814"/>
<dbReference type="KEGG" id="tko:TK0309"/>
<dbReference type="PATRIC" id="fig|69014.16.peg.308"/>
<dbReference type="eggNOG" id="arCOG01559">
    <property type="taxonomic scope" value="Archaea"/>
</dbReference>
<dbReference type="HOGENOM" id="CLU_002794_11_1_2"/>
<dbReference type="InParanoid" id="Q5JFZ3"/>
<dbReference type="OrthoDB" id="6290at2157"/>
<dbReference type="PhylomeDB" id="Q5JFZ3"/>
<dbReference type="Proteomes" id="UP000000536">
    <property type="component" value="Chromosome"/>
</dbReference>
<dbReference type="GO" id="GO:0005829">
    <property type="term" value="C:cytosol"/>
    <property type="evidence" value="ECO:0000318"/>
    <property type="project" value="GO_Central"/>
</dbReference>
<dbReference type="GO" id="GO:1990904">
    <property type="term" value="C:ribonucleoprotein complex"/>
    <property type="evidence" value="ECO:0000318"/>
    <property type="project" value="GO_Central"/>
</dbReference>
<dbReference type="GO" id="GO:0005525">
    <property type="term" value="F:GTP binding"/>
    <property type="evidence" value="ECO:0007669"/>
    <property type="project" value="UniProtKB-UniRule"/>
</dbReference>
<dbReference type="GO" id="GO:0003924">
    <property type="term" value="F:GTPase activity"/>
    <property type="evidence" value="ECO:0000318"/>
    <property type="project" value="GO_Central"/>
</dbReference>
<dbReference type="GO" id="GO:0003746">
    <property type="term" value="F:translation elongation factor activity"/>
    <property type="evidence" value="ECO:0000318"/>
    <property type="project" value="GO_Central"/>
</dbReference>
<dbReference type="GO" id="GO:0006414">
    <property type="term" value="P:translational elongation"/>
    <property type="evidence" value="ECO:0000318"/>
    <property type="project" value="GO_Central"/>
</dbReference>
<dbReference type="CDD" id="cd01681">
    <property type="entry name" value="aeEF2_snRNP_like_IV"/>
    <property type="match status" value="1"/>
</dbReference>
<dbReference type="CDD" id="cd01885">
    <property type="entry name" value="EF2"/>
    <property type="match status" value="1"/>
</dbReference>
<dbReference type="CDD" id="cd16268">
    <property type="entry name" value="EF2_II"/>
    <property type="match status" value="1"/>
</dbReference>
<dbReference type="CDD" id="cd16261">
    <property type="entry name" value="EF2_snRNP_III"/>
    <property type="match status" value="1"/>
</dbReference>
<dbReference type="CDD" id="cd01514">
    <property type="entry name" value="Elongation_Factor_C"/>
    <property type="match status" value="1"/>
</dbReference>
<dbReference type="FunFam" id="3.30.230.10:FF:000009">
    <property type="entry name" value="116 kDa U5 small nuclear ribonucleoprotein component"/>
    <property type="match status" value="1"/>
</dbReference>
<dbReference type="FunFam" id="2.40.30.10:FF:000110">
    <property type="entry name" value="Elongation factor 2"/>
    <property type="match status" value="1"/>
</dbReference>
<dbReference type="FunFam" id="3.30.70.240:FF:000010">
    <property type="entry name" value="Elongation factor 2"/>
    <property type="match status" value="1"/>
</dbReference>
<dbReference type="FunFam" id="3.40.50.300:FF:000684">
    <property type="entry name" value="Elongation factor 2"/>
    <property type="match status" value="1"/>
</dbReference>
<dbReference type="FunFam" id="3.30.70.870:FF:000002">
    <property type="entry name" value="Translation elongation factor 2"/>
    <property type="match status" value="1"/>
</dbReference>
<dbReference type="Gene3D" id="3.30.230.10">
    <property type="match status" value="1"/>
</dbReference>
<dbReference type="Gene3D" id="3.30.70.240">
    <property type="match status" value="1"/>
</dbReference>
<dbReference type="Gene3D" id="3.30.70.870">
    <property type="entry name" value="Elongation Factor G (Translational Gtpase), domain 3"/>
    <property type="match status" value="1"/>
</dbReference>
<dbReference type="Gene3D" id="3.40.50.300">
    <property type="entry name" value="P-loop containing nucleotide triphosphate hydrolases"/>
    <property type="match status" value="1"/>
</dbReference>
<dbReference type="Gene3D" id="2.40.30.10">
    <property type="entry name" value="Translation factors"/>
    <property type="match status" value="1"/>
</dbReference>
<dbReference type="HAMAP" id="MF_00054_A">
    <property type="entry name" value="EF_G_EF_2_A"/>
    <property type="match status" value="1"/>
</dbReference>
<dbReference type="InterPro" id="IPR041095">
    <property type="entry name" value="EFG_II"/>
</dbReference>
<dbReference type="InterPro" id="IPR035647">
    <property type="entry name" value="EFG_III/V"/>
</dbReference>
<dbReference type="InterPro" id="IPR000640">
    <property type="entry name" value="EFG_V-like"/>
</dbReference>
<dbReference type="InterPro" id="IPR004161">
    <property type="entry name" value="EFTu-like_2"/>
</dbReference>
<dbReference type="InterPro" id="IPR031157">
    <property type="entry name" value="G_TR_CS"/>
</dbReference>
<dbReference type="InterPro" id="IPR027417">
    <property type="entry name" value="P-loop_NTPase"/>
</dbReference>
<dbReference type="InterPro" id="IPR020568">
    <property type="entry name" value="Ribosomal_Su5_D2-typ_SF"/>
</dbReference>
<dbReference type="InterPro" id="IPR014721">
    <property type="entry name" value="Ribsml_uS5_D2-typ_fold_subgr"/>
</dbReference>
<dbReference type="InterPro" id="IPR005225">
    <property type="entry name" value="Small_GTP-bd"/>
</dbReference>
<dbReference type="InterPro" id="IPR000795">
    <property type="entry name" value="T_Tr_GTP-bd_dom"/>
</dbReference>
<dbReference type="InterPro" id="IPR009000">
    <property type="entry name" value="Transl_B-barrel_sf"/>
</dbReference>
<dbReference type="InterPro" id="IPR004543">
    <property type="entry name" value="Transl_elong_EFG/EF2_arc"/>
</dbReference>
<dbReference type="InterPro" id="IPR005517">
    <property type="entry name" value="Transl_elong_EFG/EF2_IV"/>
</dbReference>
<dbReference type="NCBIfam" id="TIGR00490">
    <property type="entry name" value="aEF-2"/>
    <property type="match status" value="1"/>
</dbReference>
<dbReference type="NCBIfam" id="TIGR00231">
    <property type="entry name" value="small_GTP"/>
    <property type="match status" value="1"/>
</dbReference>
<dbReference type="PANTHER" id="PTHR42908:SF3">
    <property type="entry name" value="ELONGATION FACTOR-LIKE GTPASE 1"/>
    <property type="match status" value="1"/>
</dbReference>
<dbReference type="PANTHER" id="PTHR42908">
    <property type="entry name" value="TRANSLATION ELONGATION FACTOR-RELATED"/>
    <property type="match status" value="1"/>
</dbReference>
<dbReference type="Pfam" id="PF00679">
    <property type="entry name" value="EFG_C"/>
    <property type="match status" value="1"/>
</dbReference>
<dbReference type="Pfam" id="PF14492">
    <property type="entry name" value="EFG_III"/>
    <property type="match status" value="1"/>
</dbReference>
<dbReference type="Pfam" id="PF03764">
    <property type="entry name" value="EFG_IV"/>
    <property type="match status" value="1"/>
</dbReference>
<dbReference type="Pfam" id="PF00009">
    <property type="entry name" value="GTP_EFTU"/>
    <property type="match status" value="1"/>
</dbReference>
<dbReference type="Pfam" id="PF03144">
    <property type="entry name" value="GTP_EFTU_D2"/>
    <property type="match status" value="1"/>
</dbReference>
<dbReference type="PRINTS" id="PR00315">
    <property type="entry name" value="ELONGATNFCT"/>
</dbReference>
<dbReference type="SMART" id="SM00838">
    <property type="entry name" value="EFG_C"/>
    <property type="match status" value="1"/>
</dbReference>
<dbReference type="SMART" id="SM00889">
    <property type="entry name" value="EFG_IV"/>
    <property type="match status" value="1"/>
</dbReference>
<dbReference type="SUPFAM" id="SSF54980">
    <property type="entry name" value="EF-G C-terminal domain-like"/>
    <property type="match status" value="2"/>
</dbReference>
<dbReference type="SUPFAM" id="SSF52540">
    <property type="entry name" value="P-loop containing nucleoside triphosphate hydrolases"/>
    <property type="match status" value="1"/>
</dbReference>
<dbReference type="SUPFAM" id="SSF54211">
    <property type="entry name" value="Ribosomal protein S5 domain 2-like"/>
    <property type="match status" value="1"/>
</dbReference>
<dbReference type="SUPFAM" id="SSF50447">
    <property type="entry name" value="Translation proteins"/>
    <property type="match status" value="1"/>
</dbReference>
<dbReference type="PROSITE" id="PS00301">
    <property type="entry name" value="G_TR_1"/>
    <property type="match status" value="1"/>
</dbReference>
<dbReference type="PROSITE" id="PS51722">
    <property type="entry name" value="G_TR_2"/>
    <property type="match status" value="1"/>
</dbReference>
<keyword id="KW-0963">Cytoplasm</keyword>
<keyword id="KW-0251">Elongation factor</keyword>
<keyword id="KW-0342">GTP-binding</keyword>
<keyword id="KW-0547">Nucleotide-binding</keyword>
<keyword id="KW-0648">Protein biosynthesis</keyword>
<keyword id="KW-1185">Reference proteome</keyword>
<comment type="function">
    <text evidence="1">Catalyzes the GTP-dependent ribosomal translocation step during translation elongation. During this step, the ribosome changes from the pre-translocational (PRE) to the post-translocational (POST) state as the newly formed A-site-bound peptidyl-tRNA and P-site-bound deacylated tRNA move to the P and E sites, respectively. Catalyzes the coordinated movement of the two tRNA molecules, the mRNA and conformational changes in the ribosome.</text>
</comment>
<comment type="subcellular location">
    <subcellularLocation>
        <location evidence="1">Cytoplasm</location>
    </subcellularLocation>
</comment>
<comment type="similarity">
    <text evidence="1">Belongs to the TRAFAC class translation factor GTPase superfamily. Classic translation factor GTPase family. EF-G/EF-2 subfamily.</text>
</comment>
<name>EF2_THEKO</name>
<gene>
    <name evidence="1" type="primary">fusA</name>
    <name type="ordered locus">TK0309</name>
</gene>
<sequence>MGRREEMIAKIKELMTQPERIRNMGIAAHIDHGKTTLSDNLLAGAGMISEELAGKQLVLDFDEQEQARGITINAANVSMVHNYEGNDYLINLIDTPGHVDFGGDVTRAMRAIDGAIIVVDAVEGVMPQTETVLRQALREYVKPVLFINKVDRLIKELKLTPQQMQERFVKVITDVNRLIRRYAPPEFKDKWLVKVEDGSVAFGSAYYNWALSVPYMKKTGVSFKDIIDLTNAGDLKTLRKKAPLHVVVLDMVVKHLPNPLEAQKYRIPHLWRGDINSDVGQAMMNCDPKGPMTMVVTKIILDKHAGEVATGRVWSGTVKTGQEVYLINSKRKARIQQVGIYMGPERINMEAVPAGNIVAVTGLRDAMAGETVSVQQIEPFEALHYTSEPVVTVAIEAKNVKDLPKLVEALRQLAKEDPTLHVKIDEETGQHLLSGMGELHLEVKLHRLKTEWKLDVEVSPPIVVYRESVTKQSPIVEGKSPNKHNRFYITVEPMPDEIYQAIREGEIPEGRPKDPKAVAKKLAELGMDYEIAKGIVDIYNGNMFLDNTKGIQYLNEVMDLLVDGFHQAMDEGPLAKEPVMKVIVRLHDAKIHEDNVHRGPAQIYPAIRSAIHCAMMKAGPVLYEPYQKVIINVPYEYMGAVSRELNQRRGQLIDMRQEGEVMIIIGEAPVAEMFGFAGAIRGATSGKALWTTEHAGFKRVPNELAQQIIRQIRQRKGLDPNPPKEQDVCPQQ</sequence>
<organism>
    <name type="scientific">Thermococcus kodakarensis (strain ATCC BAA-918 / JCM 12380 / KOD1)</name>
    <name type="common">Pyrococcus kodakaraensis (strain KOD1)</name>
    <dbReference type="NCBI Taxonomy" id="69014"/>
    <lineage>
        <taxon>Archaea</taxon>
        <taxon>Methanobacteriati</taxon>
        <taxon>Methanobacteriota</taxon>
        <taxon>Thermococci</taxon>
        <taxon>Thermococcales</taxon>
        <taxon>Thermococcaceae</taxon>
        <taxon>Thermococcus</taxon>
    </lineage>
</organism>
<reference key="1">
    <citation type="journal article" date="2005" name="Genome Res.">
        <title>Complete genome sequence of the hyperthermophilic archaeon Thermococcus kodakaraensis KOD1 and comparison with Pyrococcus genomes.</title>
        <authorList>
            <person name="Fukui T."/>
            <person name="Atomi H."/>
            <person name="Kanai T."/>
            <person name="Matsumi R."/>
            <person name="Fujiwara S."/>
            <person name="Imanaka T."/>
        </authorList>
    </citation>
    <scope>NUCLEOTIDE SEQUENCE [LARGE SCALE GENOMIC DNA]</scope>
    <source>
        <strain>ATCC BAA-918 / JCM 12380 / KOD1</strain>
    </source>
</reference>
<protein>
    <recommendedName>
        <fullName evidence="1">Elongation factor 2</fullName>
        <shortName evidence="1">EF-2</shortName>
    </recommendedName>
</protein>
<feature type="chain" id="PRO_0000091045" description="Elongation factor 2">
    <location>
        <begin position="1"/>
        <end position="732"/>
    </location>
</feature>
<feature type="domain" description="tr-type G">
    <location>
        <begin position="19"/>
        <end position="260"/>
    </location>
</feature>
<feature type="binding site" evidence="1">
    <location>
        <begin position="28"/>
        <end position="35"/>
    </location>
    <ligand>
        <name>GTP</name>
        <dbReference type="ChEBI" id="CHEBI:37565"/>
    </ligand>
</feature>
<feature type="binding site" evidence="1">
    <location>
        <begin position="94"/>
        <end position="98"/>
    </location>
    <ligand>
        <name>GTP</name>
        <dbReference type="ChEBI" id="CHEBI:37565"/>
    </ligand>
</feature>
<feature type="binding site" evidence="1">
    <location>
        <begin position="148"/>
        <end position="151"/>
    </location>
    <ligand>
        <name>GTP</name>
        <dbReference type="ChEBI" id="CHEBI:37565"/>
    </ligand>
</feature>
<feature type="modified residue" description="Diphthamide" evidence="1">
    <location>
        <position position="597"/>
    </location>
</feature>
<evidence type="ECO:0000255" key="1">
    <source>
        <dbReference type="HAMAP-Rule" id="MF_00054"/>
    </source>
</evidence>
<accession>Q5JFZ3</accession>
<proteinExistence type="inferred from homology"/>